<proteinExistence type="inferred from homology"/>
<gene>
    <name evidence="2" type="primary">argF</name>
    <name type="ordered locus">AHA_4091</name>
</gene>
<protein>
    <recommendedName>
        <fullName evidence="2">Ornithine carbamoyltransferase</fullName>
        <shortName evidence="2">OTCase</shortName>
        <ecNumber evidence="2">2.1.3.3</ecNumber>
    </recommendedName>
</protein>
<organism>
    <name type="scientific">Aeromonas hydrophila subsp. hydrophila (strain ATCC 7966 / DSM 30187 / BCRC 13018 / CCUG 14551 / JCM 1027 / KCTC 2358 / NCIMB 9240 / NCTC 8049)</name>
    <dbReference type="NCBI Taxonomy" id="380703"/>
    <lineage>
        <taxon>Bacteria</taxon>
        <taxon>Pseudomonadati</taxon>
        <taxon>Pseudomonadota</taxon>
        <taxon>Gammaproteobacteria</taxon>
        <taxon>Aeromonadales</taxon>
        <taxon>Aeromonadaceae</taxon>
        <taxon>Aeromonas</taxon>
    </lineage>
</organism>
<name>OTC_AERHH</name>
<dbReference type="EC" id="2.1.3.3" evidence="2"/>
<dbReference type="EMBL" id="CP000462">
    <property type="protein sequence ID" value="ABK38970.1"/>
    <property type="molecule type" value="Genomic_DNA"/>
</dbReference>
<dbReference type="RefSeq" id="WP_011707753.1">
    <property type="nucleotide sequence ID" value="NC_008570.1"/>
</dbReference>
<dbReference type="RefSeq" id="YP_858515.1">
    <property type="nucleotide sequence ID" value="NC_008570.1"/>
</dbReference>
<dbReference type="SMR" id="A0KQG4"/>
<dbReference type="STRING" id="380703.AHA_4091"/>
<dbReference type="EnsemblBacteria" id="ABK38970">
    <property type="protein sequence ID" value="ABK38970"/>
    <property type="gene ID" value="AHA_4091"/>
</dbReference>
<dbReference type="GeneID" id="4490233"/>
<dbReference type="KEGG" id="aha:AHA_4091"/>
<dbReference type="PATRIC" id="fig|380703.7.peg.4047"/>
<dbReference type="eggNOG" id="COG0078">
    <property type="taxonomic scope" value="Bacteria"/>
</dbReference>
<dbReference type="HOGENOM" id="CLU_043846_3_1_6"/>
<dbReference type="OrthoDB" id="9802587at2"/>
<dbReference type="UniPathway" id="UPA00068">
    <property type="reaction ID" value="UER00112"/>
</dbReference>
<dbReference type="Proteomes" id="UP000000756">
    <property type="component" value="Chromosome"/>
</dbReference>
<dbReference type="GO" id="GO:0005737">
    <property type="term" value="C:cytoplasm"/>
    <property type="evidence" value="ECO:0007669"/>
    <property type="project" value="UniProtKB-SubCell"/>
</dbReference>
<dbReference type="GO" id="GO:0016597">
    <property type="term" value="F:amino acid binding"/>
    <property type="evidence" value="ECO:0007669"/>
    <property type="project" value="InterPro"/>
</dbReference>
<dbReference type="GO" id="GO:0004585">
    <property type="term" value="F:ornithine carbamoyltransferase activity"/>
    <property type="evidence" value="ECO:0007669"/>
    <property type="project" value="UniProtKB-UniRule"/>
</dbReference>
<dbReference type="GO" id="GO:0042450">
    <property type="term" value="P:arginine biosynthetic process via ornithine"/>
    <property type="evidence" value="ECO:0007669"/>
    <property type="project" value="TreeGrafter"/>
</dbReference>
<dbReference type="GO" id="GO:0019240">
    <property type="term" value="P:citrulline biosynthetic process"/>
    <property type="evidence" value="ECO:0007669"/>
    <property type="project" value="TreeGrafter"/>
</dbReference>
<dbReference type="GO" id="GO:0006526">
    <property type="term" value="P:L-arginine biosynthetic process"/>
    <property type="evidence" value="ECO:0007669"/>
    <property type="project" value="UniProtKB-UniRule"/>
</dbReference>
<dbReference type="FunFam" id="3.40.50.1370:FF:000004">
    <property type="entry name" value="Ornithine carbamoyltransferase"/>
    <property type="match status" value="1"/>
</dbReference>
<dbReference type="Gene3D" id="3.40.50.1370">
    <property type="entry name" value="Aspartate/ornithine carbamoyltransferase"/>
    <property type="match status" value="2"/>
</dbReference>
<dbReference type="HAMAP" id="MF_01109">
    <property type="entry name" value="OTCase"/>
    <property type="match status" value="1"/>
</dbReference>
<dbReference type="InterPro" id="IPR006132">
    <property type="entry name" value="Asp/Orn_carbamoyltranf_P-bd"/>
</dbReference>
<dbReference type="InterPro" id="IPR006130">
    <property type="entry name" value="Asp/Orn_carbamoylTrfase"/>
</dbReference>
<dbReference type="InterPro" id="IPR036901">
    <property type="entry name" value="Asp/Orn_carbamoylTrfase_sf"/>
</dbReference>
<dbReference type="InterPro" id="IPR006131">
    <property type="entry name" value="Asp_carbamoyltransf_Asp/Orn-bd"/>
</dbReference>
<dbReference type="InterPro" id="IPR002292">
    <property type="entry name" value="Orn/put_carbamltrans"/>
</dbReference>
<dbReference type="InterPro" id="IPR024904">
    <property type="entry name" value="OTCase_ArgI"/>
</dbReference>
<dbReference type="NCBIfam" id="TIGR00658">
    <property type="entry name" value="orni_carb_tr"/>
    <property type="match status" value="1"/>
</dbReference>
<dbReference type="NCBIfam" id="NF003286">
    <property type="entry name" value="PRK04284.1"/>
    <property type="match status" value="1"/>
</dbReference>
<dbReference type="PANTHER" id="PTHR45753:SF2">
    <property type="entry name" value="ORNITHINE CARBAMOYLTRANSFERASE"/>
    <property type="match status" value="1"/>
</dbReference>
<dbReference type="PANTHER" id="PTHR45753">
    <property type="entry name" value="ORNITHINE CARBAMOYLTRANSFERASE, MITOCHONDRIAL"/>
    <property type="match status" value="1"/>
</dbReference>
<dbReference type="Pfam" id="PF00185">
    <property type="entry name" value="OTCace"/>
    <property type="match status" value="1"/>
</dbReference>
<dbReference type="Pfam" id="PF02729">
    <property type="entry name" value="OTCace_N"/>
    <property type="match status" value="1"/>
</dbReference>
<dbReference type="PRINTS" id="PR00100">
    <property type="entry name" value="AOTCASE"/>
</dbReference>
<dbReference type="PRINTS" id="PR00102">
    <property type="entry name" value="OTCASE"/>
</dbReference>
<dbReference type="SUPFAM" id="SSF53671">
    <property type="entry name" value="Aspartate/ornithine carbamoyltransferase"/>
    <property type="match status" value="1"/>
</dbReference>
<dbReference type="PROSITE" id="PS00097">
    <property type="entry name" value="CARBAMOYLTRANSFERASE"/>
    <property type="match status" value="1"/>
</dbReference>
<accession>A0KQG4</accession>
<sequence length="334" mass="37596">MAFNLRNRNFLKLLDFTPREIQYMIDLAIDLKKAKYGGYERKHLTGKNIALIFEKTSTRTRCAFEVAAFDQGAQVSYLGPSGSQIGHKESMKDTARVLGRMYDGIEYRGYGQEIVEELGAYAGVPVWNGLTNEFHPTQILADFMTMLEHGKGKRLDQIKFAYLGDARNNMGNSLMVGAAKMGMDIRLVAPKAFWPEEDLVAKCRLIAEETGARITLTEDVKEGVLGADFLYTDVWVSMGEAKEAWDQRVKLMTPYQVNMDVINATKNPDVKFMHCLPAFHNDETTMGKEVADKYGMKGLEVTEDVFESEHSIVFDEAENRMHTIKAVMVATLGD</sequence>
<reference key="1">
    <citation type="journal article" date="2006" name="J. Bacteriol.">
        <title>Genome sequence of Aeromonas hydrophila ATCC 7966T: jack of all trades.</title>
        <authorList>
            <person name="Seshadri R."/>
            <person name="Joseph S.W."/>
            <person name="Chopra A.K."/>
            <person name="Sha J."/>
            <person name="Shaw J."/>
            <person name="Graf J."/>
            <person name="Haft D.H."/>
            <person name="Wu M."/>
            <person name="Ren Q."/>
            <person name="Rosovitz M.J."/>
            <person name="Madupu R."/>
            <person name="Tallon L."/>
            <person name="Kim M."/>
            <person name="Jin S."/>
            <person name="Vuong H."/>
            <person name="Stine O.C."/>
            <person name="Ali A."/>
            <person name="Horneman A.J."/>
            <person name="Heidelberg J.F."/>
        </authorList>
    </citation>
    <scope>NUCLEOTIDE SEQUENCE [LARGE SCALE GENOMIC DNA]</scope>
    <source>
        <strain>ATCC 7966 / DSM 30187 / BCRC 13018 / CCUG 14551 / JCM 1027 / KCTC 2358 / NCIMB 9240 / NCTC 8049</strain>
    </source>
</reference>
<keyword id="KW-0028">Amino-acid biosynthesis</keyword>
<keyword id="KW-0055">Arginine biosynthesis</keyword>
<keyword id="KW-0963">Cytoplasm</keyword>
<keyword id="KW-1185">Reference proteome</keyword>
<keyword id="KW-0808">Transferase</keyword>
<comment type="function">
    <text evidence="1">Reversibly catalyzes the transfer of the carbamoyl group from carbamoyl phosphate (CP) to the N(epsilon) atom of ornithine (ORN) to produce L-citrulline.</text>
</comment>
<comment type="catalytic activity">
    <reaction evidence="2">
        <text>carbamoyl phosphate + L-ornithine = L-citrulline + phosphate + H(+)</text>
        <dbReference type="Rhea" id="RHEA:19513"/>
        <dbReference type="ChEBI" id="CHEBI:15378"/>
        <dbReference type="ChEBI" id="CHEBI:43474"/>
        <dbReference type="ChEBI" id="CHEBI:46911"/>
        <dbReference type="ChEBI" id="CHEBI:57743"/>
        <dbReference type="ChEBI" id="CHEBI:58228"/>
        <dbReference type="EC" id="2.1.3.3"/>
    </reaction>
</comment>
<comment type="pathway">
    <text evidence="2">Amino-acid biosynthesis; L-arginine biosynthesis; L-arginine from L-ornithine and carbamoyl phosphate: step 1/3.</text>
</comment>
<comment type="subcellular location">
    <subcellularLocation>
        <location evidence="2">Cytoplasm</location>
    </subcellularLocation>
</comment>
<comment type="similarity">
    <text evidence="2">Belongs to the aspartate/ornithine carbamoyltransferase superfamily. OTCase family.</text>
</comment>
<feature type="chain" id="PRO_1000065071" description="Ornithine carbamoyltransferase">
    <location>
        <begin position="1"/>
        <end position="334"/>
    </location>
</feature>
<feature type="binding site" evidence="2">
    <location>
        <begin position="57"/>
        <end position="60"/>
    </location>
    <ligand>
        <name>carbamoyl phosphate</name>
        <dbReference type="ChEBI" id="CHEBI:58228"/>
    </ligand>
</feature>
<feature type="binding site" evidence="2">
    <location>
        <position position="84"/>
    </location>
    <ligand>
        <name>carbamoyl phosphate</name>
        <dbReference type="ChEBI" id="CHEBI:58228"/>
    </ligand>
</feature>
<feature type="binding site" evidence="2">
    <location>
        <position position="108"/>
    </location>
    <ligand>
        <name>carbamoyl phosphate</name>
        <dbReference type="ChEBI" id="CHEBI:58228"/>
    </ligand>
</feature>
<feature type="binding site" evidence="2">
    <location>
        <begin position="135"/>
        <end position="138"/>
    </location>
    <ligand>
        <name>carbamoyl phosphate</name>
        <dbReference type="ChEBI" id="CHEBI:58228"/>
    </ligand>
</feature>
<feature type="binding site" evidence="2">
    <location>
        <position position="169"/>
    </location>
    <ligand>
        <name>L-ornithine</name>
        <dbReference type="ChEBI" id="CHEBI:46911"/>
    </ligand>
</feature>
<feature type="binding site" evidence="2">
    <location>
        <position position="233"/>
    </location>
    <ligand>
        <name>L-ornithine</name>
        <dbReference type="ChEBI" id="CHEBI:46911"/>
    </ligand>
</feature>
<feature type="binding site" evidence="2">
    <location>
        <begin position="237"/>
        <end position="238"/>
    </location>
    <ligand>
        <name>L-ornithine</name>
        <dbReference type="ChEBI" id="CHEBI:46911"/>
    </ligand>
</feature>
<feature type="binding site" evidence="2">
    <location>
        <begin position="275"/>
        <end position="276"/>
    </location>
    <ligand>
        <name>carbamoyl phosphate</name>
        <dbReference type="ChEBI" id="CHEBI:58228"/>
    </ligand>
</feature>
<feature type="binding site" evidence="2">
    <location>
        <position position="320"/>
    </location>
    <ligand>
        <name>carbamoyl phosphate</name>
        <dbReference type="ChEBI" id="CHEBI:58228"/>
    </ligand>
</feature>
<evidence type="ECO:0000250" key="1"/>
<evidence type="ECO:0000255" key="2">
    <source>
        <dbReference type="HAMAP-Rule" id="MF_01109"/>
    </source>
</evidence>